<gene>
    <name evidence="1" type="primary">groEL2</name>
    <name evidence="1" type="synonym">groL2</name>
    <name type="ordered locus">BRADO2892</name>
</gene>
<feature type="chain" id="PRO_0000331979" description="Chaperonin GroEL 2">
    <location>
        <begin position="1"/>
        <end position="546"/>
    </location>
</feature>
<feature type="binding site" evidence="1">
    <location>
        <begin position="30"/>
        <end position="33"/>
    </location>
    <ligand>
        <name>ATP</name>
        <dbReference type="ChEBI" id="CHEBI:30616"/>
    </ligand>
</feature>
<feature type="binding site" evidence="1">
    <location>
        <position position="51"/>
    </location>
    <ligand>
        <name>ATP</name>
        <dbReference type="ChEBI" id="CHEBI:30616"/>
    </ligand>
</feature>
<feature type="binding site" evidence="1">
    <location>
        <begin position="87"/>
        <end position="91"/>
    </location>
    <ligand>
        <name>ATP</name>
        <dbReference type="ChEBI" id="CHEBI:30616"/>
    </ligand>
</feature>
<feature type="binding site" evidence="1">
    <location>
        <position position="415"/>
    </location>
    <ligand>
        <name>ATP</name>
        <dbReference type="ChEBI" id="CHEBI:30616"/>
    </ligand>
</feature>
<feature type="binding site" evidence="1">
    <location>
        <position position="496"/>
    </location>
    <ligand>
        <name>ATP</name>
        <dbReference type="ChEBI" id="CHEBI:30616"/>
    </ligand>
</feature>
<accession>A4YS25</accession>
<proteinExistence type="inferred from homology"/>
<name>CH602_BRASO</name>
<protein>
    <recommendedName>
        <fullName evidence="1">Chaperonin GroEL 2</fullName>
        <ecNumber evidence="1">5.6.1.7</ecNumber>
    </recommendedName>
    <alternativeName>
        <fullName evidence="1">60 kDa chaperonin 2</fullName>
    </alternativeName>
    <alternativeName>
        <fullName evidence="1">Chaperonin-60 2</fullName>
        <shortName evidence="1">Cpn60 2</shortName>
    </alternativeName>
</protein>
<evidence type="ECO:0000255" key="1">
    <source>
        <dbReference type="HAMAP-Rule" id="MF_00600"/>
    </source>
</evidence>
<comment type="function">
    <text evidence="1">Together with its co-chaperonin GroES, plays an essential role in assisting protein folding. The GroEL-GroES system forms a nano-cage that allows encapsulation of the non-native substrate proteins and provides a physical environment optimized to promote and accelerate protein folding.</text>
</comment>
<comment type="catalytic activity">
    <reaction evidence="1">
        <text>ATP + H2O + a folded polypeptide = ADP + phosphate + an unfolded polypeptide.</text>
        <dbReference type="EC" id="5.6.1.7"/>
    </reaction>
</comment>
<comment type="subunit">
    <text evidence="1">Forms a cylinder of 14 subunits composed of two heptameric rings stacked back-to-back. Interacts with the co-chaperonin GroES.</text>
</comment>
<comment type="subcellular location">
    <subcellularLocation>
        <location evidence="1">Cytoplasm</location>
    </subcellularLocation>
</comment>
<comment type="similarity">
    <text evidence="1">Belongs to the chaperonin (HSP60) family.</text>
</comment>
<dbReference type="EC" id="5.6.1.7" evidence="1"/>
<dbReference type="EMBL" id="CU234118">
    <property type="protein sequence ID" value="CAL76701.1"/>
    <property type="molecule type" value="Genomic_DNA"/>
</dbReference>
<dbReference type="RefSeq" id="WP_011925901.1">
    <property type="nucleotide sequence ID" value="NC_009445.1"/>
</dbReference>
<dbReference type="SMR" id="A4YS25"/>
<dbReference type="STRING" id="114615.BRADO2892"/>
<dbReference type="KEGG" id="bra:BRADO2892"/>
<dbReference type="eggNOG" id="COG0459">
    <property type="taxonomic scope" value="Bacteria"/>
</dbReference>
<dbReference type="HOGENOM" id="CLU_016503_3_0_5"/>
<dbReference type="OrthoDB" id="9766614at2"/>
<dbReference type="Proteomes" id="UP000001994">
    <property type="component" value="Chromosome"/>
</dbReference>
<dbReference type="GO" id="GO:0005737">
    <property type="term" value="C:cytoplasm"/>
    <property type="evidence" value="ECO:0007669"/>
    <property type="project" value="UniProtKB-SubCell"/>
</dbReference>
<dbReference type="GO" id="GO:0005524">
    <property type="term" value="F:ATP binding"/>
    <property type="evidence" value="ECO:0007669"/>
    <property type="project" value="UniProtKB-UniRule"/>
</dbReference>
<dbReference type="GO" id="GO:0140662">
    <property type="term" value="F:ATP-dependent protein folding chaperone"/>
    <property type="evidence" value="ECO:0007669"/>
    <property type="project" value="InterPro"/>
</dbReference>
<dbReference type="GO" id="GO:0016853">
    <property type="term" value="F:isomerase activity"/>
    <property type="evidence" value="ECO:0007669"/>
    <property type="project" value="UniProtKB-KW"/>
</dbReference>
<dbReference type="GO" id="GO:0051082">
    <property type="term" value="F:unfolded protein binding"/>
    <property type="evidence" value="ECO:0007669"/>
    <property type="project" value="UniProtKB-UniRule"/>
</dbReference>
<dbReference type="GO" id="GO:0042026">
    <property type="term" value="P:protein refolding"/>
    <property type="evidence" value="ECO:0007669"/>
    <property type="project" value="UniProtKB-UniRule"/>
</dbReference>
<dbReference type="CDD" id="cd03344">
    <property type="entry name" value="GroEL"/>
    <property type="match status" value="1"/>
</dbReference>
<dbReference type="FunFam" id="1.10.560.10:FF:000001">
    <property type="entry name" value="60 kDa chaperonin"/>
    <property type="match status" value="1"/>
</dbReference>
<dbReference type="FunFam" id="3.50.7.10:FF:000001">
    <property type="entry name" value="60 kDa chaperonin"/>
    <property type="match status" value="1"/>
</dbReference>
<dbReference type="Gene3D" id="3.50.7.10">
    <property type="entry name" value="GroEL"/>
    <property type="match status" value="1"/>
</dbReference>
<dbReference type="Gene3D" id="1.10.560.10">
    <property type="entry name" value="GroEL-like equatorial domain"/>
    <property type="match status" value="1"/>
</dbReference>
<dbReference type="Gene3D" id="3.30.260.10">
    <property type="entry name" value="TCP-1-like chaperonin intermediate domain"/>
    <property type="match status" value="1"/>
</dbReference>
<dbReference type="HAMAP" id="MF_00600">
    <property type="entry name" value="CH60"/>
    <property type="match status" value="1"/>
</dbReference>
<dbReference type="InterPro" id="IPR018370">
    <property type="entry name" value="Chaperonin_Cpn60_CS"/>
</dbReference>
<dbReference type="InterPro" id="IPR001844">
    <property type="entry name" value="Cpn60/GroEL"/>
</dbReference>
<dbReference type="InterPro" id="IPR002423">
    <property type="entry name" value="Cpn60/GroEL/TCP-1"/>
</dbReference>
<dbReference type="InterPro" id="IPR027409">
    <property type="entry name" value="GroEL-like_apical_dom_sf"/>
</dbReference>
<dbReference type="InterPro" id="IPR027413">
    <property type="entry name" value="GROEL-like_equatorial_sf"/>
</dbReference>
<dbReference type="InterPro" id="IPR027410">
    <property type="entry name" value="TCP-1-like_intermed_sf"/>
</dbReference>
<dbReference type="NCBIfam" id="TIGR02348">
    <property type="entry name" value="GroEL"/>
    <property type="match status" value="1"/>
</dbReference>
<dbReference type="NCBIfam" id="NF000592">
    <property type="entry name" value="PRK00013.1"/>
    <property type="match status" value="1"/>
</dbReference>
<dbReference type="NCBIfam" id="NF009487">
    <property type="entry name" value="PRK12849.1"/>
    <property type="match status" value="1"/>
</dbReference>
<dbReference type="NCBIfam" id="NF009488">
    <property type="entry name" value="PRK12850.1"/>
    <property type="match status" value="1"/>
</dbReference>
<dbReference type="NCBIfam" id="NF009489">
    <property type="entry name" value="PRK12851.1"/>
    <property type="match status" value="1"/>
</dbReference>
<dbReference type="NCBIfam" id="NF010704">
    <property type="entry name" value="PRK14104.1"/>
    <property type="match status" value="1"/>
</dbReference>
<dbReference type="PANTHER" id="PTHR45633">
    <property type="entry name" value="60 KDA HEAT SHOCK PROTEIN, MITOCHONDRIAL"/>
    <property type="match status" value="1"/>
</dbReference>
<dbReference type="Pfam" id="PF00118">
    <property type="entry name" value="Cpn60_TCP1"/>
    <property type="match status" value="1"/>
</dbReference>
<dbReference type="PRINTS" id="PR00298">
    <property type="entry name" value="CHAPERONIN60"/>
</dbReference>
<dbReference type="SUPFAM" id="SSF52029">
    <property type="entry name" value="GroEL apical domain-like"/>
    <property type="match status" value="1"/>
</dbReference>
<dbReference type="SUPFAM" id="SSF48592">
    <property type="entry name" value="GroEL equatorial domain-like"/>
    <property type="match status" value="1"/>
</dbReference>
<dbReference type="SUPFAM" id="SSF54849">
    <property type="entry name" value="GroEL-intermediate domain like"/>
    <property type="match status" value="1"/>
</dbReference>
<dbReference type="PROSITE" id="PS00296">
    <property type="entry name" value="CHAPERONINS_CPN60"/>
    <property type="match status" value="1"/>
</dbReference>
<reference key="1">
    <citation type="journal article" date="2007" name="Science">
        <title>Legumes symbioses: absence of nod genes in photosynthetic bradyrhizobia.</title>
        <authorList>
            <person name="Giraud E."/>
            <person name="Moulin L."/>
            <person name="Vallenet D."/>
            <person name="Barbe V."/>
            <person name="Cytryn E."/>
            <person name="Avarre J.-C."/>
            <person name="Jaubert M."/>
            <person name="Simon D."/>
            <person name="Cartieaux F."/>
            <person name="Prin Y."/>
            <person name="Bena G."/>
            <person name="Hannibal L."/>
            <person name="Fardoux J."/>
            <person name="Kojadinovic M."/>
            <person name="Vuillet L."/>
            <person name="Lajus A."/>
            <person name="Cruveiller S."/>
            <person name="Rouy Z."/>
            <person name="Mangenot S."/>
            <person name="Segurens B."/>
            <person name="Dossat C."/>
            <person name="Franck W.L."/>
            <person name="Chang W.-S."/>
            <person name="Saunders E."/>
            <person name="Bruce D."/>
            <person name="Richardson P."/>
            <person name="Normand P."/>
            <person name="Dreyfus B."/>
            <person name="Pignol D."/>
            <person name="Stacey G."/>
            <person name="Emerich D."/>
            <person name="Vermeglio A."/>
            <person name="Medigue C."/>
            <person name="Sadowsky M."/>
        </authorList>
    </citation>
    <scope>NUCLEOTIDE SEQUENCE [LARGE SCALE GENOMIC DNA]</scope>
    <source>
        <strain>ORS 278</strain>
    </source>
</reference>
<organism>
    <name type="scientific">Bradyrhizobium sp. (strain ORS 278)</name>
    <dbReference type="NCBI Taxonomy" id="114615"/>
    <lineage>
        <taxon>Bacteria</taxon>
        <taxon>Pseudomonadati</taxon>
        <taxon>Pseudomonadota</taxon>
        <taxon>Alphaproteobacteria</taxon>
        <taxon>Hyphomicrobiales</taxon>
        <taxon>Nitrobacteraceae</taxon>
        <taxon>Bradyrhizobium</taxon>
    </lineage>
</organism>
<keyword id="KW-0067">ATP-binding</keyword>
<keyword id="KW-0143">Chaperone</keyword>
<keyword id="KW-0963">Cytoplasm</keyword>
<keyword id="KW-0413">Isomerase</keyword>
<keyword id="KW-0547">Nucleotide-binding</keyword>
<keyword id="KW-1185">Reference proteome</keyword>
<sequence length="546" mass="57797">MSAKDVKFGVEARDRMLRGVDILANAVKVTLGPKGRNVVLDKSFGAPRITKDGVTVAKEIELDDKFENMGAQMVREVASKSADAAGDGTTTATVLAQAIVREGAKAVAAGMNPMDLKRGIDLAVEAVVADLVKNSKKVTSNDEIAQVGTISANGDSEIGKFLADAMKKVGNEGVITVEEAKSLETELDVVEGMQFDRGYISPYFVTNADKMRVEMDDAYILINEKKLSSLNELLPLLEAVVQTGKPLVIVAEDVEGEALATLVVNRLRGGLKVAAVKAPGFGDRRKAMLQDIAILTGGQAISEDLGIKLENVNLSMLGRAKKVMIDKENTTIVNGAGKKADIEARVAQIKAQIEETTSDYDREKLQERLAKLAGGVAVIRVGGATEVEVKERKDRVDDAMHATRAAVEEGILPGGGVALLRASEQLKGVRTKNEDQKTGVEIVRKALSAPARQIAINAGEDGSVIVGKILEKEQYAYGFDSQSGDYVNMVSKGIIDPTKVVRTAIQNAASVASLLITTEAMVAELPKKAAAGPAMPPGGGMGGMDF</sequence>